<name>RS16_LUPPO</name>
<protein>
    <recommendedName>
        <fullName evidence="2">Small ribosomal subunit protein uS9</fullName>
    </recommendedName>
    <alternativeName>
        <fullName>40S ribosomal protein S16</fullName>
    </alternativeName>
</protein>
<keyword id="KW-0963">Cytoplasm</keyword>
<keyword id="KW-0687">Ribonucleoprotein</keyword>
<keyword id="KW-0689">Ribosomal protein</keyword>
<accession>P16149</accession>
<reference key="1">
    <citation type="journal article" date="1991" name="Plant Mol. Biol.">
        <title>Molecular cloning of a cDNA from Lupinus polyphyllus cell cultures encoding a ribosomal protein (rps16).</title>
        <authorList>
            <person name="Warskulat U."/>
            <person name="Perrey R."/>
            <person name="Wink M."/>
        </authorList>
    </citation>
    <scope>NUCLEOTIDE SEQUENCE [MRNA]</scope>
</reference>
<gene>
    <name type="primary">RPS16</name>
</gene>
<feature type="chain" id="PRO_0000111492" description="Small ribosomal subunit protein uS9">
    <location>
        <begin position="1"/>
        <end position="145"/>
    </location>
</feature>
<feature type="region of interest" description="Disordered" evidence="1">
    <location>
        <begin position="1"/>
        <end position="24"/>
    </location>
</feature>
<feature type="compositionally biased region" description="Polar residues" evidence="1">
    <location>
        <begin position="1"/>
        <end position="13"/>
    </location>
</feature>
<proteinExistence type="evidence at transcript level"/>
<comment type="subcellular location">
    <subcellularLocation>
        <location>Cytoplasm</location>
    </subcellularLocation>
</comment>
<comment type="similarity">
    <text evidence="2">Belongs to the universal ribosomal protein uS9 family.</text>
</comment>
<sequence length="145" mass="16189">MATDQHSNKSNVSAARKPLSPSPTASAAGLIKINGSPIELVEPEILRFKAFEPILLLGKSRFAGVDMRIRVKGGGHTSQIYAIRQSIAKALVAFYQKYVDEQSKKEIKDILVRYDRTLLVADPRRCEPKKFGGRGARARFQKSYR</sequence>
<organism>
    <name type="scientific">Lupinus polyphyllus</name>
    <name type="common">Large-leaved lupine</name>
    <dbReference type="NCBI Taxonomy" id="3874"/>
    <lineage>
        <taxon>Eukaryota</taxon>
        <taxon>Viridiplantae</taxon>
        <taxon>Streptophyta</taxon>
        <taxon>Embryophyta</taxon>
        <taxon>Tracheophyta</taxon>
        <taxon>Spermatophyta</taxon>
        <taxon>Magnoliopsida</taxon>
        <taxon>eudicotyledons</taxon>
        <taxon>Gunneridae</taxon>
        <taxon>Pentapetalae</taxon>
        <taxon>rosids</taxon>
        <taxon>fabids</taxon>
        <taxon>Fabales</taxon>
        <taxon>Fabaceae</taxon>
        <taxon>Papilionoideae</taxon>
        <taxon>50 kb inversion clade</taxon>
        <taxon>genistoids sensu lato</taxon>
        <taxon>core genistoids</taxon>
        <taxon>Genisteae</taxon>
        <taxon>Lupinus</taxon>
    </lineage>
</organism>
<dbReference type="EMBL" id="X51766">
    <property type="protein sequence ID" value="CAA36068.1"/>
    <property type="molecule type" value="mRNA"/>
</dbReference>
<dbReference type="PIR" id="S15003">
    <property type="entry name" value="R3YL16"/>
</dbReference>
<dbReference type="SMR" id="P16149"/>
<dbReference type="GO" id="GO:0022627">
    <property type="term" value="C:cytosolic small ribosomal subunit"/>
    <property type="evidence" value="ECO:0007669"/>
    <property type="project" value="TreeGrafter"/>
</dbReference>
<dbReference type="GO" id="GO:0003723">
    <property type="term" value="F:RNA binding"/>
    <property type="evidence" value="ECO:0007669"/>
    <property type="project" value="TreeGrafter"/>
</dbReference>
<dbReference type="GO" id="GO:0003735">
    <property type="term" value="F:structural constituent of ribosome"/>
    <property type="evidence" value="ECO:0007669"/>
    <property type="project" value="InterPro"/>
</dbReference>
<dbReference type="GO" id="GO:0000462">
    <property type="term" value="P:maturation of SSU-rRNA from tricistronic rRNA transcript (SSU-rRNA, 5.8S rRNA, LSU-rRNA)"/>
    <property type="evidence" value="ECO:0007669"/>
    <property type="project" value="TreeGrafter"/>
</dbReference>
<dbReference type="GO" id="GO:0006412">
    <property type="term" value="P:translation"/>
    <property type="evidence" value="ECO:0007669"/>
    <property type="project" value="InterPro"/>
</dbReference>
<dbReference type="FunFam" id="3.30.230.10:FF:000007">
    <property type="entry name" value="40S ribosomal protein S16"/>
    <property type="match status" value="1"/>
</dbReference>
<dbReference type="Gene3D" id="3.30.230.10">
    <property type="match status" value="1"/>
</dbReference>
<dbReference type="InterPro" id="IPR020568">
    <property type="entry name" value="Ribosomal_Su5_D2-typ_SF"/>
</dbReference>
<dbReference type="InterPro" id="IPR000754">
    <property type="entry name" value="Ribosomal_uS9"/>
</dbReference>
<dbReference type="InterPro" id="IPR020574">
    <property type="entry name" value="Ribosomal_uS9_CS"/>
</dbReference>
<dbReference type="InterPro" id="IPR014721">
    <property type="entry name" value="Ribsml_uS5_D2-typ_fold_subgr"/>
</dbReference>
<dbReference type="PANTHER" id="PTHR21569:SF16">
    <property type="entry name" value="RIBOSOMAL PROTEIN S16"/>
    <property type="match status" value="1"/>
</dbReference>
<dbReference type="PANTHER" id="PTHR21569">
    <property type="entry name" value="RIBOSOMAL PROTEIN S9"/>
    <property type="match status" value="1"/>
</dbReference>
<dbReference type="Pfam" id="PF00380">
    <property type="entry name" value="Ribosomal_S9"/>
    <property type="match status" value="1"/>
</dbReference>
<dbReference type="SUPFAM" id="SSF54211">
    <property type="entry name" value="Ribosomal protein S5 domain 2-like"/>
    <property type="match status" value="1"/>
</dbReference>
<dbReference type="PROSITE" id="PS00360">
    <property type="entry name" value="RIBOSOMAL_S9"/>
    <property type="match status" value="1"/>
</dbReference>
<evidence type="ECO:0000256" key="1">
    <source>
        <dbReference type="SAM" id="MobiDB-lite"/>
    </source>
</evidence>
<evidence type="ECO:0000305" key="2"/>